<keyword id="KW-0002">3D-structure</keyword>
<keyword id="KW-0021">Allosteric enzyme</keyword>
<keyword id="KW-0120">Carbon dioxide fixation</keyword>
<keyword id="KW-0963">Cytoplasm</keyword>
<keyword id="KW-0456">Lyase</keyword>
<keyword id="KW-0460">Magnesium</keyword>
<keyword id="KW-0597">Phosphoprotein</keyword>
<keyword id="KW-0602">Photosynthesis</keyword>
<organism>
    <name type="scientific">Flaveria pringlei</name>
    <dbReference type="NCBI Taxonomy" id="4226"/>
    <lineage>
        <taxon>Eukaryota</taxon>
        <taxon>Viridiplantae</taxon>
        <taxon>Streptophyta</taxon>
        <taxon>Embryophyta</taxon>
        <taxon>Tracheophyta</taxon>
        <taxon>Spermatophyta</taxon>
        <taxon>Magnoliopsida</taxon>
        <taxon>eudicotyledons</taxon>
        <taxon>Gunneridae</taxon>
        <taxon>Pentapetalae</taxon>
        <taxon>asterids</taxon>
        <taxon>campanulids</taxon>
        <taxon>Asterales</taxon>
        <taxon>Asteraceae</taxon>
        <taxon>Asteroideae</taxon>
        <taxon>Heliantheae alliance</taxon>
        <taxon>Tageteae</taxon>
        <taxon>Flaveria</taxon>
    </lineage>
</organism>
<sequence length="967" mass="110629">MANRNLEKLASIDAQLRLLVPGKVSEDDKLIEYDALLLDKFLDILQDLHGEDLKEAVQECYELSAEYEGKHDPKKLEELGSVLTSLDPGDSIVIAKAFSHMLNLANLAEEVQIAYRRRIKLKRGDFADEANATTESDIEETFKKLVLKLNKSPEEVFDALKNQTVDLVLTAHPTQSVRRSLLQKHGRIRNCLAQLYAKDITPDDKQELDEALHREIQAAFRTDEIRRTPPTPQDEMRAGMSYFHETIWKGVPKFLRRVDTALKNIGINERVPYNAPLIQFSSWMGGDRDGKHPRVTPEVTRDVCLLARMMASNMYFSQIEDLMFEMSMWRCNSELRVRAEELYRTARRDVKHYIEFWKQVPPTEPYRVILGDVRDKLYNTRERSRHLLAHGISDIPEEAVYTNVEQFLEPLELCYRSLCDCGDRVIADGSLLDFLRQVSTFGLSLVKLDIRQESDRHTDVLDAITQHLEIGSYREWSEEKRQEWLLAELSGKRPLFGSDLPKTEEVKDVLDTFNVLAELPSDCFGAYIISMATSPSDVLAVELLQRECHVKHPLRVVPLFEKLADLEAAPAAMARLFSIDWYRNRIDGKQEVMIGYSDSGKDAGRFSAAWQLYKAQEEIIKVAKEFGVKLVIFHGRGGTVGRGGGPTHLAILSQPPDTIHGSLRVTVQGEVIEQSFGEEHLCFRTLQRFCAATLEHGMNPPISPRPEWRELMDQMAVVATEEYRSIVFKEPRFVEYFRLATPELEYGRMNIGSRPSKRKPSGGIESLRAIPWIFAWTQTRFHLPVWLGFGAAFKHAIKKDSKNLQMLQEMYKTWPFFRVTIDLVEMVFAKGDPGIAALNDKLLVSEDLWPFGESLRANYEETKDYLLKIAGHRDLLEGDPYLKQRIRLRDSYITTLNVCQAYTLKRIRDPNYHVTLRPHISKEYAAEPSKPADELIHLNPTSEYAPGLEDTLILTMKGIAAGMQNTG</sequence>
<comment type="function">
    <text>Through the carboxylation of phosphoenolpyruvate (PEP) it forms oxaloacetate, a four-carbon dicarboxylic acid source for the tricarboxylic acid cycle.</text>
</comment>
<comment type="catalytic activity">
    <reaction>
        <text>oxaloacetate + phosphate = phosphoenolpyruvate + hydrogencarbonate</text>
        <dbReference type="Rhea" id="RHEA:28370"/>
        <dbReference type="ChEBI" id="CHEBI:16452"/>
        <dbReference type="ChEBI" id="CHEBI:17544"/>
        <dbReference type="ChEBI" id="CHEBI:43474"/>
        <dbReference type="ChEBI" id="CHEBI:58702"/>
        <dbReference type="EC" id="4.1.1.31"/>
    </reaction>
</comment>
<comment type="cofactor">
    <cofactor evidence="1">
        <name>Mg(2+)</name>
        <dbReference type="ChEBI" id="CHEBI:18420"/>
    </cofactor>
</comment>
<comment type="activity regulation">
    <text>By light-reversible phosphorylation.</text>
</comment>
<comment type="pathway">
    <text>Photosynthesis; C3 acid pathway.</text>
</comment>
<comment type="subunit">
    <text>Homotetramer.</text>
</comment>
<comment type="subcellular location">
    <subcellularLocation>
        <location>Cytoplasm</location>
    </subcellularLocation>
</comment>
<comment type="similarity">
    <text evidence="2">Belongs to the PEPCase type 1 family.</text>
</comment>
<feature type="chain" id="PRO_0000166664" description="Phosphoenolpyruvate carboxylase">
    <location>
        <begin position="1"/>
        <end position="967"/>
    </location>
</feature>
<feature type="active site" evidence="1">
    <location>
        <position position="172"/>
    </location>
</feature>
<feature type="active site" evidence="1">
    <location>
        <position position="601"/>
    </location>
</feature>
<feature type="modified residue" description="Phosphoserine" evidence="1">
    <location>
        <position position="11"/>
    </location>
</feature>
<feature type="sequence conflict" description="In Ref. 2; CAA88829." evidence="2" ref="2">
    <original>KH</original>
    <variation>N</variation>
    <location>
        <begin position="291"/>
        <end position="292"/>
    </location>
</feature>
<feature type="helix" evidence="3">
    <location>
        <begin position="9"/>
        <end position="19"/>
    </location>
</feature>
<feature type="helix" evidence="3">
    <location>
        <begin position="30"/>
        <end position="49"/>
    </location>
</feature>
<feature type="helix" evidence="3">
    <location>
        <begin position="51"/>
        <end position="70"/>
    </location>
</feature>
<feature type="helix" evidence="3">
    <location>
        <begin position="74"/>
        <end position="83"/>
    </location>
</feature>
<feature type="helix" evidence="3">
    <location>
        <begin position="88"/>
        <end position="115"/>
    </location>
</feature>
<feature type="helix" evidence="3">
    <location>
        <begin position="126"/>
        <end position="130"/>
    </location>
</feature>
<feature type="turn" evidence="3">
    <location>
        <begin position="132"/>
        <end position="134"/>
    </location>
</feature>
<feature type="helix" evidence="3">
    <location>
        <begin position="138"/>
        <end position="148"/>
    </location>
</feature>
<feature type="helix" evidence="3">
    <location>
        <begin position="153"/>
        <end position="161"/>
    </location>
</feature>
<feature type="strand" evidence="3">
    <location>
        <begin position="164"/>
        <end position="169"/>
    </location>
</feature>
<feature type="helix" evidence="3">
    <location>
        <begin position="179"/>
        <end position="195"/>
    </location>
</feature>
<feature type="helix" evidence="3">
    <location>
        <begin position="202"/>
        <end position="220"/>
    </location>
</feature>
<feature type="helix" evidence="3">
    <location>
        <begin position="232"/>
        <end position="239"/>
    </location>
</feature>
<feature type="helix" evidence="3">
    <location>
        <begin position="242"/>
        <end position="245"/>
    </location>
</feature>
<feature type="helix" evidence="3">
    <location>
        <begin position="247"/>
        <end position="264"/>
    </location>
</feature>
<feature type="strand" evidence="3">
    <location>
        <begin position="278"/>
        <end position="282"/>
    </location>
</feature>
<feature type="turn" evidence="3">
    <location>
        <begin position="284"/>
        <end position="286"/>
    </location>
</feature>
<feature type="helix" evidence="3">
    <location>
        <begin position="297"/>
        <end position="325"/>
    </location>
</feature>
<feature type="helix" evidence="3">
    <location>
        <begin position="333"/>
        <end position="344"/>
    </location>
</feature>
<feature type="helix" evidence="3">
    <location>
        <begin position="365"/>
        <end position="390"/>
    </location>
</feature>
<feature type="helix" evidence="3">
    <location>
        <begin position="397"/>
        <end position="399"/>
    </location>
</feature>
<feature type="helix" evidence="3">
    <location>
        <begin position="404"/>
        <end position="420"/>
    </location>
</feature>
<feature type="helix" evidence="3">
    <location>
        <begin position="424"/>
        <end position="427"/>
    </location>
</feature>
<feature type="helix" evidence="3">
    <location>
        <begin position="430"/>
        <end position="441"/>
    </location>
</feature>
<feature type="strand" evidence="3">
    <location>
        <begin position="444"/>
        <end position="453"/>
    </location>
</feature>
<feature type="helix" evidence="3">
    <location>
        <begin position="454"/>
        <end position="467"/>
    </location>
</feature>
<feature type="turn" evidence="3">
    <location>
        <begin position="473"/>
        <end position="475"/>
    </location>
</feature>
<feature type="helix" evidence="3">
    <location>
        <begin position="478"/>
        <end position="489"/>
    </location>
</feature>
<feature type="helix" evidence="3">
    <location>
        <begin position="504"/>
        <end position="518"/>
    </location>
</feature>
<feature type="helix" evidence="3">
    <location>
        <begin position="521"/>
        <end position="523"/>
    </location>
</feature>
<feature type="strand" evidence="3">
    <location>
        <begin position="524"/>
        <end position="530"/>
    </location>
</feature>
<feature type="helix" evidence="3">
    <location>
        <begin position="535"/>
        <end position="547"/>
    </location>
</feature>
<feature type="strand" evidence="3">
    <location>
        <begin position="555"/>
        <end position="560"/>
    </location>
</feature>
<feature type="helix" evidence="3">
    <location>
        <begin position="563"/>
        <end position="577"/>
    </location>
</feature>
<feature type="helix" evidence="3">
    <location>
        <begin position="580"/>
        <end position="586"/>
    </location>
</feature>
<feature type="strand" evidence="3">
    <location>
        <begin position="589"/>
        <end position="594"/>
    </location>
</feature>
<feature type="helix" evidence="3">
    <location>
        <begin position="596"/>
        <end position="603"/>
    </location>
</feature>
<feature type="helix" evidence="3">
    <location>
        <begin position="605"/>
        <end position="626"/>
    </location>
</feature>
<feature type="strand" evidence="3">
    <location>
        <begin position="629"/>
        <end position="634"/>
    </location>
</feature>
<feature type="helix" evidence="3">
    <location>
        <begin position="639"/>
        <end position="641"/>
    </location>
</feature>
<feature type="helix" evidence="3">
    <location>
        <begin position="645"/>
        <end position="652"/>
    </location>
</feature>
<feature type="strand" evidence="3">
    <location>
        <begin position="662"/>
        <end position="667"/>
    </location>
</feature>
<feature type="turn" evidence="3">
    <location>
        <begin position="669"/>
        <end position="671"/>
    </location>
</feature>
<feature type="helix" evidence="3">
    <location>
        <begin position="672"/>
        <end position="676"/>
    </location>
</feature>
<feature type="helix" evidence="3">
    <location>
        <begin position="679"/>
        <end position="698"/>
    </location>
</feature>
<feature type="helix" evidence="3">
    <location>
        <begin position="706"/>
        <end position="727"/>
    </location>
</feature>
<feature type="helix" evidence="3">
    <location>
        <begin position="733"/>
        <end position="740"/>
    </location>
</feature>
<feature type="helix" evidence="3">
    <location>
        <begin position="743"/>
        <end position="748"/>
    </location>
</feature>
<feature type="strand" evidence="3">
    <location>
        <begin position="751"/>
        <end position="753"/>
    </location>
</feature>
<feature type="turn" evidence="3">
    <location>
        <begin position="764"/>
        <end position="766"/>
    </location>
</feature>
<feature type="helix" evidence="3">
    <location>
        <begin position="769"/>
        <end position="777"/>
    </location>
</feature>
<feature type="turn" evidence="3">
    <location>
        <begin position="778"/>
        <end position="780"/>
    </location>
</feature>
<feature type="helix" evidence="3">
    <location>
        <begin position="783"/>
        <end position="786"/>
    </location>
</feature>
<feature type="helix" evidence="3">
    <location>
        <begin position="789"/>
        <end position="799"/>
    </location>
</feature>
<feature type="helix" evidence="3">
    <location>
        <begin position="802"/>
        <end position="813"/>
    </location>
</feature>
<feature type="helix" evidence="3">
    <location>
        <begin position="815"/>
        <end position="829"/>
    </location>
</feature>
<feature type="helix" evidence="3">
    <location>
        <begin position="833"/>
        <end position="843"/>
    </location>
</feature>
<feature type="helix" evidence="3">
    <location>
        <begin position="846"/>
        <end position="848"/>
    </location>
</feature>
<feature type="helix" evidence="3">
    <location>
        <begin position="849"/>
        <end position="870"/>
    </location>
</feature>
<feature type="turn" evidence="3">
    <location>
        <begin position="875"/>
        <end position="878"/>
    </location>
</feature>
<feature type="helix" evidence="3">
    <location>
        <begin position="880"/>
        <end position="908"/>
    </location>
</feature>
<feature type="helix" evidence="3">
    <location>
        <begin position="948"/>
        <end position="963"/>
    </location>
</feature>
<gene>
    <name type="primary">PPCA1</name>
</gene>
<proteinExistence type="evidence at protein level"/>
<name>CAPP1_FLAPR</name>
<dbReference type="EC" id="4.1.1.31"/>
<dbReference type="EMBL" id="X64144">
    <property type="protein sequence ID" value="CAA45505.1"/>
    <property type="molecule type" value="Genomic_DNA"/>
</dbReference>
<dbReference type="EMBL" id="Z48966">
    <property type="protein sequence ID" value="CAA88829.1"/>
    <property type="molecule type" value="mRNA"/>
</dbReference>
<dbReference type="PIR" id="S25081">
    <property type="entry name" value="S25081"/>
</dbReference>
<dbReference type="PIR" id="S52853">
    <property type="entry name" value="S52853"/>
</dbReference>
<dbReference type="PDB" id="3ZGB">
    <property type="method" value="X-ray"/>
    <property type="resolution" value="2.71 A"/>
    <property type="chains" value="A/B=6-967"/>
</dbReference>
<dbReference type="PDBsum" id="3ZGB"/>
<dbReference type="SMR" id="Q01647"/>
<dbReference type="BRENDA" id="4.1.1.31">
    <property type="organism ID" value="2269"/>
</dbReference>
<dbReference type="SABIO-RK" id="Q01647"/>
<dbReference type="UniPathway" id="UPA00321"/>
<dbReference type="EvolutionaryTrace" id="Q01647"/>
<dbReference type="GO" id="GO:0048046">
    <property type="term" value="C:apoplast"/>
    <property type="evidence" value="ECO:0007669"/>
    <property type="project" value="TreeGrafter"/>
</dbReference>
<dbReference type="GO" id="GO:0009507">
    <property type="term" value="C:chloroplast"/>
    <property type="evidence" value="ECO:0007669"/>
    <property type="project" value="TreeGrafter"/>
</dbReference>
<dbReference type="GO" id="GO:0005829">
    <property type="term" value="C:cytosol"/>
    <property type="evidence" value="ECO:0007669"/>
    <property type="project" value="TreeGrafter"/>
</dbReference>
<dbReference type="GO" id="GO:0008964">
    <property type="term" value="F:phosphoenolpyruvate carboxylase activity"/>
    <property type="evidence" value="ECO:0007669"/>
    <property type="project" value="UniProtKB-EC"/>
</dbReference>
<dbReference type="GO" id="GO:0015977">
    <property type="term" value="P:carbon fixation"/>
    <property type="evidence" value="ECO:0007669"/>
    <property type="project" value="UniProtKB-KW"/>
</dbReference>
<dbReference type="GO" id="GO:0048366">
    <property type="term" value="P:leaf development"/>
    <property type="evidence" value="ECO:0007669"/>
    <property type="project" value="TreeGrafter"/>
</dbReference>
<dbReference type="GO" id="GO:0015979">
    <property type="term" value="P:photosynthesis"/>
    <property type="evidence" value="ECO:0007669"/>
    <property type="project" value="UniProtKB-KW"/>
</dbReference>
<dbReference type="GO" id="GO:0006099">
    <property type="term" value="P:tricarboxylic acid cycle"/>
    <property type="evidence" value="ECO:0007669"/>
    <property type="project" value="InterPro"/>
</dbReference>
<dbReference type="FunFam" id="1.20.1440.90:FF:000001">
    <property type="entry name" value="Phosphoenolpyruvate carboxylase 1"/>
    <property type="match status" value="1"/>
</dbReference>
<dbReference type="Gene3D" id="1.20.1440.90">
    <property type="entry name" value="Phosphoenolpyruvate/pyruvate domain"/>
    <property type="match status" value="1"/>
</dbReference>
<dbReference type="HAMAP" id="MF_00595">
    <property type="entry name" value="PEPcase_type1"/>
    <property type="match status" value="1"/>
</dbReference>
<dbReference type="InterPro" id="IPR021135">
    <property type="entry name" value="PEP_COase"/>
</dbReference>
<dbReference type="InterPro" id="IPR022805">
    <property type="entry name" value="PEP_COase_bac/pln-type"/>
</dbReference>
<dbReference type="InterPro" id="IPR018129">
    <property type="entry name" value="PEP_COase_Lys_AS"/>
</dbReference>
<dbReference type="InterPro" id="IPR033129">
    <property type="entry name" value="PEPCASE_His_AS"/>
</dbReference>
<dbReference type="InterPro" id="IPR015813">
    <property type="entry name" value="Pyrv/PenolPyrv_kinase-like_dom"/>
</dbReference>
<dbReference type="NCBIfam" id="NF000584">
    <property type="entry name" value="PRK00009.1"/>
    <property type="match status" value="1"/>
</dbReference>
<dbReference type="PANTHER" id="PTHR30523">
    <property type="entry name" value="PHOSPHOENOLPYRUVATE CARBOXYLASE"/>
    <property type="match status" value="1"/>
</dbReference>
<dbReference type="PANTHER" id="PTHR30523:SF33">
    <property type="entry name" value="PHOSPHOENOLPYRUVATE CARBOXYLASE 3"/>
    <property type="match status" value="1"/>
</dbReference>
<dbReference type="Pfam" id="PF00311">
    <property type="entry name" value="PEPcase"/>
    <property type="match status" value="1"/>
</dbReference>
<dbReference type="PRINTS" id="PR00150">
    <property type="entry name" value="PEPCARBXLASE"/>
</dbReference>
<dbReference type="SUPFAM" id="SSF51621">
    <property type="entry name" value="Phosphoenolpyruvate/pyruvate domain"/>
    <property type="match status" value="1"/>
</dbReference>
<dbReference type="PROSITE" id="PS00781">
    <property type="entry name" value="PEPCASE_1"/>
    <property type="match status" value="1"/>
</dbReference>
<dbReference type="PROSITE" id="PS00393">
    <property type="entry name" value="PEPCASE_2"/>
    <property type="match status" value="1"/>
</dbReference>
<protein>
    <recommendedName>
        <fullName>Phosphoenolpyruvate carboxylase</fullName>
        <shortName>PEPC</shortName>
        <shortName>PEPCase</shortName>
        <ecNumber>4.1.1.31</ecNumber>
    </recommendedName>
</protein>
<reference key="1">
    <citation type="journal article" date="1992" name="Mol. Gen. Genet.">
        <title>Homologous genes for the C4 isoform of phosphoenolpyruvate carboxylase in a C3 and a C4 Flaveria species.</title>
        <authorList>
            <person name="Hermans J."/>
            <person name="Westhoff P."/>
        </authorList>
    </citation>
    <scope>NUCLEOTIDE SEQUENCE [GENOMIC DNA]</scope>
</reference>
<reference key="2">
    <citation type="submission" date="1995-04" db="EMBL/GenBank/DDBJ databases">
        <authorList>
            <person name="Svensson P."/>
            <person name="Blaesing O.E."/>
            <person name="Westhoff P."/>
        </authorList>
    </citation>
    <scope>NUCLEOTIDE SEQUENCE [MRNA]</scope>
    <source>
        <tissue>Leaf</tissue>
    </source>
</reference>
<accession>Q01647</accession>
<evidence type="ECO:0000250" key="1"/>
<evidence type="ECO:0000305" key="2"/>
<evidence type="ECO:0007829" key="3">
    <source>
        <dbReference type="PDB" id="3ZGB"/>
    </source>
</evidence>